<keyword id="KW-0067">ATP-binding</keyword>
<keyword id="KW-0418">Kinase</keyword>
<keyword id="KW-0547">Nucleotide-binding</keyword>
<keyword id="KW-1185">Reference proteome</keyword>
<keyword id="KW-0808">Transferase</keyword>
<organism>
    <name type="scientific">Pongo abelii</name>
    <name type="common">Sumatran orangutan</name>
    <name type="synonym">Pongo pygmaeus abelii</name>
    <dbReference type="NCBI Taxonomy" id="9601"/>
    <lineage>
        <taxon>Eukaryota</taxon>
        <taxon>Metazoa</taxon>
        <taxon>Chordata</taxon>
        <taxon>Craniata</taxon>
        <taxon>Vertebrata</taxon>
        <taxon>Euteleostomi</taxon>
        <taxon>Mammalia</taxon>
        <taxon>Eutheria</taxon>
        <taxon>Euarchontoglires</taxon>
        <taxon>Primates</taxon>
        <taxon>Haplorrhini</taxon>
        <taxon>Catarrhini</taxon>
        <taxon>Hominidae</taxon>
        <taxon>Pongo</taxon>
    </lineage>
</organism>
<name>GALK2_PONAB</name>
<sequence>MATESPATRRVQVAEHPRLLKLKEMFNSKFGSIPKFYVRAPGRVNIIGEHIDYCGYSVLPMAVEQDVLIAVEPVKTYTLQLANTNPLYPDLSTSANNIQIDKTKPLWHNYFLCGLKGIQEHFGVSNLTGMNCLVDGNIPPSSGLSSSSALVCCAGLVTLTVLGRNLSKVELAEICAKSERYIGTEGGGMDQSISFLAEEGTAKLIEFSPLRATDVKLPSGAVFVIANSCVEMNKAATSHFNIRVMECRLAAKLLAKYKSLQWDKVLRLEEVQAKLGISLEEMLLVTEDALHPEPYNPEEICRCLGISLEELRTQILSPNTQDVLIFKLYQRAKHVYSEAARVLQFKKICEEAPENMVQLLGELMNQSHMSCRDMYECSCPELDQLVDICRKFGAQGSRLTGAGWGGCTVSIVPADKLPSFLANVHKAYYHRSDGSLAPEKQSLFATKPGGGALVLLEA</sequence>
<gene>
    <name type="primary">GALK2</name>
</gene>
<dbReference type="EC" id="2.7.1.157"/>
<dbReference type="EMBL" id="CR860491">
    <property type="protein sequence ID" value="CAH92612.1"/>
    <property type="molecule type" value="mRNA"/>
</dbReference>
<dbReference type="RefSeq" id="NP_001126530.1">
    <property type="nucleotide sequence ID" value="NM_001133058.1"/>
</dbReference>
<dbReference type="SMR" id="Q5R6J8"/>
<dbReference type="FunCoup" id="Q5R6J8">
    <property type="interactions" value="1966"/>
</dbReference>
<dbReference type="STRING" id="9601.ENSPPYP00000007322"/>
<dbReference type="Ensembl" id="ENSPPYT00000007624.3">
    <property type="protein sequence ID" value="ENSPPYP00000007322.3"/>
    <property type="gene ID" value="ENSPPYG00000006463.3"/>
</dbReference>
<dbReference type="GeneID" id="100173519"/>
<dbReference type="KEGG" id="pon:100173519"/>
<dbReference type="CTD" id="2585"/>
<dbReference type="eggNOG" id="KOG0631">
    <property type="taxonomic scope" value="Eukaryota"/>
</dbReference>
<dbReference type="eggNOG" id="KOG3885">
    <property type="taxonomic scope" value="Eukaryota"/>
</dbReference>
<dbReference type="GeneTree" id="ENSGT00950000183187"/>
<dbReference type="InParanoid" id="Q5R6J8"/>
<dbReference type="OMA" id="GFHDTYF"/>
<dbReference type="OrthoDB" id="187738at2759"/>
<dbReference type="Proteomes" id="UP000001595">
    <property type="component" value="Chromosome 15"/>
</dbReference>
<dbReference type="GO" id="GO:0005829">
    <property type="term" value="C:cytosol"/>
    <property type="evidence" value="ECO:0007669"/>
    <property type="project" value="TreeGrafter"/>
</dbReference>
<dbReference type="GO" id="GO:0005524">
    <property type="term" value="F:ATP binding"/>
    <property type="evidence" value="ECO:0007669"/>
    <property type="project" value="UniProtKB-KW"/>
</dbReference>
<dbReference type="GO" id="GO:0004335">
    <property type="term" value="F:galactokinase activity"/>
    <property type="evidence" value="ECO:0007669"/>
    <property type="project" value="Ensembl"/>
</dbReference>
<dbReference type="GO" id="GO:0033858">
    <property type="term" value="F:N-acetylgalactosamine kinase activity"/>
    <property type="evidence" value="ECO:0007669"/>
    <property type="project" value="UniProtKB-EC"/>
</dbReference>
<dbReference type="GO" id="GO:0006012">
    <property type="term" value="P:galactose metabolic process"/>
    <property type="evidence" value="ECO:0007669"/>
    <property type="project" value="InterPro"/>
</dbReference>
<dbReference type="FunFam" id="3.30.70.3170:FF:000001">
    <property type="entry name" value="galactokinase isoform X1"/>
    <property type="match status" value="1"/>
</dbReference>
<dbReference type="FunFam" id="1.20.1440.340:FF:000001">
    <property type="entry name" value="N-acetylgalactosamine kinase isoform 2"/>
    <property type="match status" value="1"/>
</dbReference>
<dbReference type="FunFam" id="3.30.230.10:FF:000023">
    <property type="entry name" value="Putative N-acetylgalactosamine kinase"/>
    <property type="match status" value="1"/>
</dbReference>
<dbReference type="Gene3D" id="1.20.1440.340">
    <property type="match status" value="1"/>
</dbReference>
<dbReference type="Gene3D" id="3.30.230.10">
    <property type="match status" value="1"/>
</dbReference>
<dbReference type="Gene3D" id="3.30.70.3170">
    <property type="match status" value="1"/>
</dbReference>
<dbReference type="InterPro" id="IPR000705">
    <property type="entry name" value="Galactokinase"/>
</dbReference>
<dbReference type="InterPro" id="IPR019741">
    <property type="entry name" value="Galactokinase_CS"/>
</dbReference>
<dbReference type="InterPro" id="IPR019539">
    <property type="entry name" value="GalKase_N"/>
</dbReference>
<dbReference type="InterPro" id="IPR013750">
    <property type="entry name" value="GHMP_kinase_C_dom"/>
</dbReference>
<dbReference type="InterPro" id="IPR036554">
    <property type="entry name" value="GHMP_kinase_C_sf"/>
</dbReference>
<dbReference type="InterPro" id="IPR006204">
    <property type="entry name" value="GHMP_kinase_N_dom"/>
</dbReference>
<dbReference type="InterPro" id="IPR006203">
    <property type="entry name" value="GHMP_knse_ATP-bd_CS"/>
</dbReference>
<dbReference type="InterPro" id="IPR006206">
    <property type="entry name" value="Mevalonate/galactokinase"/>
</dbReference>
<dbReference type="InterPro" id="IPR020568">
    <property type="entry name" value="Ribosomal_Su5_D2-typ_SF"/>
</dbReference>
<dbReference type="InterPro" id="IPR014721">
    <property type="entry name" value="Ribsml_uS5_D2-typ_fold_subgr"/>
</dbReference>
<dbReference type="NCBIfam" id="TIGR00131">
    <property type="entry name" value="gal_kin"/>
    <property type="match status" value="1"/>
</dbReference>
<dbReference type="PANTHER" id="PTHR10457:SF7">
    <property type="entry name" value="GALACTOKINASE-RELATED"/>
    <property type="match status" value="1"/>
</dbReference>
<dbReference type="PANTHER" id="PTHR10457">
    <property type="entry name" value="MEVALONATE KINASE/GALACTOKINASE"/>
    <property type="match status" value="1"/>
</dbReference>
<dbReference type="Pfam" id="PF10509">
    <property type="entry name" value="GalKase_gal_bdg"/>
    <property type="match status" value="1"/>
</dbReference>
<dbReference type="Pfam" id="PF08544">
    <property type="entry name" value="GHMP_kinases_C"/>
    <property type="match status" value="1"/>
</dbReference>
<dbReference type="Pfam" id="PF00288">
    <property type="entry name" value="GHMP_kinases_N"/>
    <property type="match status" value="1"/>
</dbReference>
<dbReference type="PIRSF" id="PIRSF000530">
    <property type="entry name" value="Galactokinase"/>
    <property type="match status" value="1"/>
</dbReference>
<dbReference type="PRINTS" id="PR00473">
    <property type="entry name" value="GALCTOKINASE"/>
</dbReference>
<dbReference type="PRINTS" id="PR00959">
    <property type="entry name" value="MEVGALKINASE"/>
</dbReference>
<dbReference type="SUPFAM" id="SSF55060">
    <property type="entry name" value="GHMP Kinase, C-terminal domain"/>
    <property type="match status" value="1"/>
</dbReference>
<dbReference type="SUPFAM" id="SSF54211">
    <property type="entry name" value="Ribosomal protein S5 domain 2-like"/>
    <property type="match status" value="1"/>
</dbReference>
<dbReference type="PROSITE" id="PS00106">
    <property type="entry name" value="GALACTOKINASE"/>
    <property type="match status" value="1"/>
</dbReference>
<dbReference type="PROSITE" id="PS00627">
    <property type="entry name" value="GHMP_KINASES_ATP"/>
    <property type="match status" value="1"/>
</dbReference>
<proteinExistence type="evidence at transcript level"/>
<comment type="function">
    <text evidence="2">Acts on GalNAc (By similarity). Also acts as a galactokinase when galactose is present at high concentrations (By similarity).</text>
</comment>
<comment type="catalytic activity">
    <reaction>
        <text>N-acetyl-alpha-D-galactosamine + ATP = N-acetyl-alpha-D-galactosamine 1-phosphate + ADP + H(+)</text>
        <dbReference type="Rhea" id="RHEA:12617"/>
        <dbReference type="ChEBI" id="CHEBI:15378"/>
        <dbReference type="ChEBI" id="CHEBI:30616"/>
        <dbReference type="ChEBI" id="CHEBI:40356"/>
        <dbReference type="ChEBI" id="CHEBI:61970"/>
        <dbReference type="ChEBI" id="CHEBI:456216"/>
        <dbReference type="EC" id="2.7.1.157"/>
    </reaction>
</comment>
<comment type="subunit">
    <text evidence="2">Monomer.</text>
</comment>
<comment type="similarity">
    <text evidence="4">Belongs to the GHMP kinase family. GalK subfamily.</text>
</comment>
<accession>Q5R6J8</accession>
<protein>
    <recommendedName>
        <fullName>N-acetylgalactosamine kinase</fullName>
        <ecNumber>2.7.1.157</ecNumber>
    </recommendedName>
    <alternativeName>
        <fullName>GalNAc kinase</fullName>
    </alternativeName>
    <alternativeName>
        <fullName>Galactokinase 2</fullName>
    </alternativeName>
</protein>
<evidence type="ECO:0000250" key="1">
    <source>
        <dbReference type="UniProtKB" id="P04385"/>
    </source>
</evidence>
<evidence type="ECO:0000250" key="2">
    <source>
        <dbReference type="UniProtKB" id="Q01415"/>
    </source>
</evidence>
<evidence type="ECO:0000250" key="3">
    <source>
        <dbReference type="UniProtKB" id="Q9HHB6"/>
    </source>
</evidence>
<evidence type="ECO:0000305" key="4"/>
<feature type="chain" id="PRO_0000184649" description="N-acetylgalactosamine kinase">
    <location>
        <begin position="1"/>
        <end position="458"/>
    </location>
</feature>
<feature type="active site" description="Proton acceptor" evidence="3">
    <location>
        <position position="190"/>
    </location>
</feature>
<feature type="binding site" evidence="1">
    <location>
        <position position="43"/>
    </location>
    <ligand>
        <name>alpha-D-galactose</name>
        <dbReference type="ChEBI" id="CHEBI:28061"/>
    </ligand>
</feature>
<feature type="binding site" evidence="1">
    <location>
        <position position="49"/>
    </location>
    <ligand>
        <name>alpha-D-galactose</name>
        <dbReference type="ChEBI" id="CHEBI:28061"/>
    </ligand>
</feature>
<feature type="binding site" evidence="1">
    <location>
        <position position="50"/>
    </location>
    <ligand>
        <name>alpha-D-galactose</name>
        <dbReference type="ChEBI" id="CHEBI:28061"/>
    </ligand>
</feature>
<feature type="binding site" evidence="1">
    <location>
        <position position="52"/>
    </location>
    <ligand>
        <name>alpha-D-galactose</name>
        <dbReference type="ChEBI" id="CHEBI:28061"/>
    </ligand>
</feature>
<feature type="binding site" evidence="1">
    <location>
        <position position="143"/>
    </location>
    <ligand>
        <name>ATP</name>
        <dbReference type="ChEBI" id="CHEBI:30616"/>
    </ligand>
</feature>
<feature type="binding site" evidence="1">
    <location>
        <position position="145"/>
    </location>
    <ligand>
        <name>ATP</name>
        <dbReference type="ChEBI" id="CHEBI:30616"/>
    </ligand>
</feature>
<feature type="binding site" evidence="1">
    <location>
        <position position="146"/>
    </location>
    <ligand>
        <name>ATP</name>
        <dbReference type="ChEBI" id="CHEBI:30616"/>
    </ligand>
</feature>
<feature type="binding site" evidence="1">
    <location>
        <position position="190"/>
    </location>
    <ligand>
        <name>alpha-D-galactose</name>
        <dbReference type="ChEBI" id="CHEBI:28061"/>
    </ligand>
</feature>
<feature type="binding site" evidence="1">
    <location>
        <position position="233"/>
    </location>
    <ligand>
        <name>ATP</name>
        <dbReference type="ChEBI" id="CHEBI:30616"/>
    </ligand>
</feature>
<feature type="binding site" evidence="1">
    <location>
        <position position="234"/>
    </location>
    <ligand>
        <name>ATP</name>
        <dbReference type="ChEBI" id="CHEBI:30616"/>
    </ligand>
</feature>
<feature type="site" description="Transition state stabilizer" evidence="3">
    <location>
        <position position="43"/>
    </location>
</feature>
<reference key="1">
    <citation type="submission" date="2004-11" db="EMBL/GenBank/DDBJ databases">
        <authorList>
            <consortium name="The German cDNA consortium"/>
        </authorList>
    </citation>
    <scope>NUCLEOTIDE SEQUENCE [LARGE SCALE MRNA]</scope>
    <source>
        <tissue>Kidney</tissue>
    </source>
</reference>